<accession>Q3BVK3</accession>
<reference key="1">
    <citation type="journal article" date="2005" name="J. Bacteriol.">
        <title>Insights into genome plasticity and pathogenicity of the plant pathogenic Bacterium Xanthomonas campestris pv. vesicatoria revealed by the complete genome sequence.</title>
        <authorList>
            <person name="Thieme F."/>
            <person name="Koebnik R."/>
            <person name="Bekel T."/>
            <person name="Berger C."/>
            <person name="Boch J."/>
            <person name="Buettner D."/>
            <person name="Caldana C."/>
            <person name="Gaigalat L."/>
            <person name="Goesmann A."/>
            <person name="Kay S."/>
            <person name="Kirchner O."/>
            <person name="Lanz C."/>
            <person name="Linke B."/>
            <person name="McHardy A.C."/>
            <person name="Meyer F."/>
            <person name="Mittenhuber G."/>
            <person name="Nies D.H."/>
            <person name="Niesbach-Kloesgen U."/>
            <person name="Patschkowski T."/>
            <person name="Rueckert C."/>
            <person name="Rupp O."/>
            <person name="Schneiker S."/>
            <person name="Schuster S.C."/>
            <person name="Vorhoelter F.J."/>
            <person name="Weber E."/>
            <person name="Puehler A."/>
            <person name="Bonas U."/>
            <person name="Bartels D."/>
            <person name="Kaiser O."/>
        </authorList>
    </citation>
    <scope>NUCLEOTIDE SEQUENCE [LARGE SCALE GENOMIC DNA]</scope>
    <source>
        <strain>85-10</strain>
    </source>
</reference>
<sequence length="265" mass="29266">MPQVTMRQMLEAGVHFGHQTRYWNPKMAPYIFGARGKIHIINLEKTVPLFNDAMNFLSSVAQKRGTVLFLGTKRSARESIKEEAERCNMPFMTQRWLGGTLTNFRTVKQSVARLKELEAAETDGTFDKLVKHEVLGLRREREKLDASLGGIKEMNRLPDAIFVIDIGHEDIAIKEAKKLGIPVIAVVDTNYDPALVDYAIPGNDDAIRAVQLYARAAADAVLEGKAAAPNSASVREEEFSAESADEGKGRRAPAKKGDKKADAAE</sequence>
<organism>
    <name type="scientific">Xanthomonas euvesicatoria pv. vesicatoria (strain 85-10)</name>
    <name type="common">Xanthomonas campestris pv. vesicatoria</name>
    <dbReference type="NCBI Taxonomy" id="316273"/>
    <lineage>
        <taxon>Bacteria</taxon>
        <taxon>Pseudomonadati</taxon>
        <taxon>Pseudomonadota</taxon>
        <taxon>Gammaproteobacteria</taxon>
        <taxon>Lysobacterales</taxon>
        <taxon>Lysobacteraceae</taxon>
        <taxon>Xanthomonas</taxon>
    </lineage>
</organism>
<protein>
    <recommendedName>
        <fullName evidence="1">Small ribosomal subunit protein uS2</fullName>
    </recommendedName>
    <alternativeName>
        <fullName evidence="3">30S ribosomal protein S2</fullName>
    </alternativeName>
</protein>
<gene>
    <name evidence="1" type="primary">rpsB</name>
    <name type="ordered locus">XCV1479</name>
</gene>
<dbReference type="EMBL" id="AM039952">
    <property type="protein sequence ID" value="CAJ23110.1"/>
    <property type="molecule type" value="Genomic_DNA"/>
</dbReference>
<dbReference type="RefSeq" id="WP_011346896.1">
    <property type="nucleotide sequence ID" value="NZ_CP017190.1"/>
</dbReference>
<dbReference type="SMR" id="Q3BVK3"/>
<dbReference type="STRING" id="456327.BJD11_15250"/>
<dbReference type="GeneID" id="97509776"/>
<dbReference type="KEGG" id="xcv:XCV1479"/>
<dbReference type="eggNOG" id="COG0052">
    <property type="taxonomic scope" value="Bacteria"/>
</dbReference>
<dbReference type="HOGENOM" id="CLU_040318_1_2_6"/>
<dbReference type="Proteomes" id="UP000007069">
    <property type="component" value="Chromosome"/>
</dbReference>
<dbReference type="GO" id="GO:0022627">
    <property type="term" value="C:cytosolic small ribosomal subunit"/>
    <property type="evidence" value="ECO:0007669"/>
    <property type="project" value="TreeGrafter"/>
</dbReference>
<dbReference type="GO" id="GO:0003735">
    <property type="term" value="F:structural constituent of ribosome"/>
    <property type="evidence" value="ECO:0007669"/>
    <property type="project" value="InterPro"/>
</dbReference>
<dbReference type="GO" id="GO:0006412">
    <property type="term" value="P:translation"/>
    <property type="evidence" value="ECO:0007669"/>
    <property type="project" value="UniProtKB-UniRule"/>
</dbReference>
<dbReference type="CDD" id="cd01425">
    <property type="entry name" value="RPS2"/>
    <property type="match status" value="1"/>
</dbReference>
<dbReference type="FunFam" id="1.10.287.610:FF:000001">
    <property type="entry name" value="30S ribosomal protein S2"/>
    <property type="match status" value="1"/>
</dbReference>
<dbReference type="Gene3D" id="3.40.50.10490">
    <property type="entry name" value="Glucose-6-phosphate isomerase like protein, domain 1"/>
    <property type="match status" value="1"/>
</dbReference>
<dbReference type="Gene3D" id="1.10.287.610">
    <property type="entry name" value="Helix hairpin bin"/>
    <property type="match status" value="1"/>
</dbReference>
<dbReference type="HAMAP" id="MF_00291_B">
    <property type="entry name" value="Ribosomal_uS2_B"/>
    <property type="match status" value="1"/>
</dbReference>
<dbReference type="InterPro" id="IPR001865">
    <property type="entry name" value="Ribosomal_uS2"/>
</dbReference>
<dbReference type="InterPro" id="IPR005706">
    <property type="entry name" value="Ribosomal_uS2_bac/mit/plastid"/>
</dbReference>
<dbReference type="InterPro" id="IPR018130">
    <property type="entry name" value="Ribosomal_uS2_CS"/>
</dbReference>
<dbReference type="InterPro" id="IPR023591">
    <property type="entry name" value="Ribosomal_uS2_flav_dom_sf"/>
</dbReference>
<dbReference type="NCBIfam" id="TIGR01011">
    <property type="entry name" value="rpsB_bact"/>
    <property type="match status" value="1"/>
</dbReference>
<dbReference type="PANTHER" id="PTHR12534">
    <property type="entry name" value="30S RIBOSOMAL PROTEIN S2 PROKARYOTIC AND ORGANELLAR"/>
    <property type="match status" value="1"/>
</dbReference>
<dbReference type="PANTHER" id="PTHR12534:SF0">
    <property type="entry name" value="SMALL RIBOSOMAL SUBUNIT PROTEIN US2M"/>
    <property type="match status" value="1"/>
</dbReference>
<dbReference type="Pfam" id="PF00318">
    <property type="entry name" value="Ribosomal_S2"/>
    <property type="match status" value="1"/>
</dbReference>
<dbReference type="PRINTS" id="PR00395">
    <property type="entry name" value="RIBOSOMALS2"/>
</dbReference>
<dbReference type="SUPFAM" id="SSF52313">
    <property type="entry name" value="Ribosomal protein S2"/>
    <property type="match status" value="1"/>
</dbReference>
<dbReference type="PROSITE" id="PS00962">
    <property type="entry name" value="RIBOSOMAL_S2_1"/>
    <property type="match status" value="1"/>
</dbReference>
<dbReference type="PROSITE" id="PS00963">
    <property type="entry name" value="RIBOSOMAL_S2_2"/>
    <property type="match status" value="1"/>
</dbReference>
<name>RS2_XANE5</name>
<proteinExistence type="inferred from homology"/>
<feature type="chain" id="PRO_1000004113" description="Small ribosomal subunit protein uS2">
    <location>
        <begin position="1"/>
        <end position="265"/>
    </location>
</feature>
<feature type="region of interest" description="Disordered" evidence="2">
    <location>
        <begin position="226"/>
        <end position="265"/>
    </location>
</feature>
<feature type="compositionally biased region" description="Basic and acidic residues" evidence="2">
    <location>
        <begin position="245"/>
        <end position="265"/>
    </location>
</feature>
<keyword id="KW-0687">Ribonucleoprotein</keyword>
<keyword id="KW-0689">Ribosomal protein</keyword>
<comment type="similarity">
    <text evidence="1">Belongs to the universal ribosomal protein uS2 family.</text>
</comment>
<evidence type="ECO:0000255" key="1">
    <source>
        <dbReference type="HAMAP-Rule" id="MF_00291"/>
    </source>
</evidence>
<evidence type="ECO:0000256" key="2">
    <source>
        <dbReference type="SAM" id="MobiDB-lite"/>
    </source>
</evidence>
<evidence type="ECO:0000305" key="3"/>